<organism>
    <name type="scientific">Deinococcus radiodurans (strain ATCC 13939 / DSM 20539 / JCM 16871 / CCUG 27074 / LMG 4051 / NBRC 15346 / NCIMB 9279 / VKM B-1422 / R1)</name>
    <dbReference type="NCBI Taxonomy" id="243230"/>
    <lineage>
        <taxon>Bacteria</taxon>
        <taxon>Thermotogati</taxon>
        <taxon>Deinococcota</taxon>
        <taxon>Deinococci</taxon>
        <taxon>Deinococcales</taxon>
        <taxon>Deinococcaceae</taxon>
        <taxon>Deinococcus</taxon>
    </lineage>
</organism>
<evidence type="ECO:0000250" key="1"/>
<evidence type="ECO:0000305" key="2"/>
<sequence length="283" mass="30191">MLRRAQTCRSATGNGGLKATVTLQAGFPGVHGVYRHAEVLSNLSVSMRPTFNPFKRGQAALLKLSAGILGRLPSGHTASLPIHTYTVINSAARGHCSFSLPQNRRRRLGLPAEGVPLDPALKNGACASLSVRRWRLFSAAPRAGEGWRHAGTRRVGAAGAAARLPAGQPGAPDAIRREGLRPVHRHHVSLSADTGAAQQVGARRGRAVALVVATGALREAGYDFFRSDNGVWLTDTVPPEYLIRFQIESRTYPGAILRGAHGKNTVLRRWTGIRRLSGCSGIG</sequence>
<comment type="function">
    <text evidence="1">Removes the 2'-phosphate from RNA via an intermediate in which the phosphate is ADP-ribosylated by NAD followed by a presumed transesterification to release the RNA and generate ADP-ribose 1''-2''-cyclic phosphate (APPR&gt;P). May function as an ADP-ribosylase (By similarity).</text>
</comment>
<comment type="similarity">
    <text evidence="2">Belongs to the KptA/TPT1 family.</text>
</comment>
<gene>
    <name type="primary">kptA</name>
    <name type="ordered locus">DR_2427</name>
</gene>
<reference key="1">
    <citation type="journal article" date="1999" name="Science">
        <title>Genome sequence of the radioresistant bacterium Deinococcus radiodurans R1.</title>
        <authorList>
            <person name="White O."/>
            <person name="Eisen J.A."/>
            <person name="Heidelberg J.F."/>
            <person name="Hickey E.K."/>
            <person name="Peterson J.D."/>
            <person name="Dodson R.J."/>
            <person name="Haft D.H."/>
            <person name="Gwinn M.L."/>
            <person name="Nelson W.C."/>
            <person name="Richardson D.L."/>
            <person name="Moffat K.S."/>
            <person name="Qin H."/>
            <person name="Jiang L."/>
            <person name="Pamphile W."/>
            <person name="Crosby M."/>
            <person name="Shen M."/>
            <person name="Vamathevan J.J."/>
            <person name="Lam P."/>
            <person name="McDonald L.A."/>
            <person name="Utterback T.R."/>
            <person name="Zalewski C."/>
            <person name="Makarova K.S."/>
            <person name="Aravind L."/>
            <person name="Daly M.J."/>
            <person name="Minton K.W."/>
            <person name="Fleischmann R.D."/>
            <person name="Ketchum K.A."/>
            <person name="Nelson K.E."/>
            <person name="Salzberg S.L."/>
            <person name="Smith H.O."/>
            <person name="Venter J.C."/>
            <person name="Fraser C.M."/>
        </authorList>
    </citation>
    <scope>NUCLEOTIDE SEQUENCE [LARGE SCALE GENOMIC DNA]</scope>
    <source>
        <strain>ATCC 13939 / DSM 20539 / JCM 16871 / CCUG 27074 / LMG 4051 / NBRC 15346 / NCIMB 9279 / VKM B-1422 / R1</strain>
    </source>
</reference>
<feature type="chain" id="PRO_0000157479" description="Probable RNA 2'-phosphotransferase">
    <location>
        <begin position="1"/>
        <end position="283"/>
    </location>
</feature>
<accession>Q9RRR1</accession>
<dbReference type="EC" id="2.7.1.-"/>
<dbReference type="EMBL" id="AE000513">
    <property type="protein sequence ID" value="AAF11978.1"/>
    <property type="molecule type" value="Genomic_DNA"/>
</dbReference>
<dbReference type="PIR" id="A75274">
    <property type="entry name" value="A75274"/>
</dbReference>
<dbReference type="RefSeq" id="NP_296147.1">
    <property type="nucleotide sequence ID" value="NC_001263.1"/>
</dbReference>
<dbReference type="SMR" id="Q9RRR1"/>
<dbReference type="STRING" id="243230.DR_2427"/>
<dbReference type="PaxDb" id="243230-DR_2427"/>
<dbReference type="EnsemblBacteria" id="AAF11978">
    <property type="protein sequence ID" value="AAF11978"/>
    <property type="gene ID" value="DR_2427"/>
</dbReference>
<dbReference type="KEGG" id="dra:DR_2427"/>
<dbReference type="eggNOG" id="COG1859">
    <property type="taxonomic scope" value="Bacteria"/>
</dbReference>
<dbReference type="HOGENOM" id="CLU_982540_0_0_0"/>
<dbReference type="InParanoid" id="Q9RRR1"/>
<dbReference type="OrthoDB" id="4537997at2"/>
<dbReference type="BRENDA" id="2.7.1.160">
    <property type="organism ID" value="1856"/>
</dbReference>
<dbReference type="Proteomes" id="UP000002524">
    <property type="component" value="Chromosome 1"/>
</dbReference>
<dbReference type="GO" id="GO:0003950">
    <property type="term" value="F:NAD+ poly-ADP-ribosyltransferase activity"/>
    <property type="evidence" value="ECO:0007669"/>
    <property type="project" value="InterPro"/>
</dbReference>
<dbReference type="GO" id="GO:0000215">
    <property type="term" value="F:tRNA 2'-phosphotransferase activity"/>
    <property type="evidence" value="ECO:0000318"/>
    <property type="project" value="GO_Central"/>
</dbReference>
<dbReference type="GO" id="GO:0008033">
    <property type="term" value="P:tRNA processing"/>
    <property type="evidence" value="ECO:0000318"/>
    <property type="project" value="GO_Central"/>
</dbReference>
<dbReference type="GO" id="GO:0006388">
    <property type="term" value="P:tRNA splicing, via endonucleolytic cleavage and ligation"/>
    <property type="evidence" value="ECO:0007669"/>
    <property type="project" value="UniProtKB-UniRule"/>
</dbReference>
<dbReference type="Gene3D" id="3.20.170.30">
    <property type="match status" value="1"/>
</dbReference>
<dbReference type="HAMAP" id="MF_00299">
    <property type="entry name" value="KptA"/>
    <property type="match status" value="1"/>
</dbReference>
<dbReference type="InterPro" id="IPR002745">
    <property type="entry name" value="Ptrans_KptA/Tpt1"/>
</dbReference>
<dbReference type="InterPro" id="IPR042081">
    <property type="entry name" value="RNA_2'-PTrans_C"/>
</dbReference>
<dbReference type="InterPro" id="IPR022928">
    <property type="entry name" value="RNA_2'-PTrans_KptA"/>
</dbReference>
<dbReference type="PANTHER" id="PTHR12684">
    <property type="entry name" value="PUTATIVE PHOSPHOTRANSFERASE"/>
    <property type="match status" value="1"/>
</dbReference>
<dbReference type="PANTHER" id="PTHR12684:SF2">
    <property type="entry name" value="TRNA 2'-PHOSPHOTRANSFERASE 1"/>
    <property type="match status" value="1"/>
</dbReference>
<dbReference type="Pfam" id="PF01885">
    <property type="entry name" value="PTS_2-RNA"/>
    <property type="match status" value="1"/>
</dbReference>
<dbReference type="SUPFAM" id="SSF56399">
    <property type="entry name" value="ADP-ribosylation"/>
    <property type="match status" value="1"/>
</dbReference>
<keyword id="KW-0520">NAD</keyword>
<keyword id="KW-1185">Reference proteome</keyword>
<keyword id="KW-0808">Transferase</keyword>
<protein>
    <recommendedName>
        <fullName>Probable RNA 2'-phosphotransferase</fullName>
        <ecNumber>2.7.1.-</ecNumber>
    </recommendedName>
</protein>
<name>KPTA_DEIRA</name>
<proteinExistence type="inferred from homology"/>